<feature type="chain" id="PRO_0000082340" description="Taste receptor type 2 member 50">
    <location>
        <begin position="1"/>
        <end position="299"/>
    </location>
</feature>
<feature type="topological domain" description="Extracellular" evidence="2">
    <location>
        <position position="1"/>
    </location>
</feature>
<feature type="transmembrane region" description="Helical; Name=1" evidence="2">
    <location>
        <begin position="2"/>
        <end position="22"/>
    </location>
</feature>
<feature type="topological domain" description="Cytoplasmic" evidence="2">
    <location>
        <begin position="23"/>
        <end position="55"/>
    </location>
</feature>
<feature type="transmembrane region" description="Helical; Name=2" evidence="2">
    <location>
        <begin position="56"/>
        <end position="76"/>
    </location>
</feature>
<feature type="topological domain" description="Extracellular" evidence="2">
    <location>
        <begin position="77"/>
        <end position="87"/>
    </location>
</feature>
<feature type="transmembrane region" description="Helical; Name=3" evidence="2">
    <location>
        <begin position="88"/>
        <end position="108"/>
    </location>
</feature>
<feature type="topological domain" description="Cytoplasmic" evidence="2">
    <location>
        <begin position="109"/>
        <end position="126"/>
    </location>
</feature>
<feature type="transmembrane region" description="Helical; Name=4" evidence="2">
    <location>
        <begin position="127"/>
        <end position="147"/>
    </location>
</feature>
<feature type="topological domain" description="Extracellular" evidence="2">
    <location>
        <begin position="148"/>
        <end position="181"/>
    </location>
</feature>
<feature type="transmembrane region" description="Helical; Name=5" evidence="2">
    <location>
        <begin position="182"/>
        <end position="202"/>
    </location>
</feature>
<feature type="topological domain" description="Cytoplasmic" evidence="2">
    <location>
        <begin position="203"/>
        <end position="229"/>
    </location>
</feature>
<feature type="transmembrane region" description="Helical; Name=6" evidence="2">
    <location>
        <begin position="230"/>
        <end position="250"/>
    </location>
</feature>
<feature type="topological domain" description="Extracellular" evidence="2">
    <location>
        <begin position="251"/>
        <end position="259"/>
    </location>
</feature>
<feature type="transmembrane region" description="Helical; Name=7" evidence="2">
    <location>
        <begin position="260"/>
        <end position="280"/>
    </location>
</feature>
<feature type="topological domain" description="Cytoplasmic" evidence="2">
    <location>
        <begin position="281"/>
        <end position="299"/>
    </location>
</feature>
<feature type="glycosylation site" description="N-linked (GlcNAc...) asparagine" evidence="2">
    <location>
        <position position="161"/>
    </location>
</feature>
<gene>
    <name type="primary">TAS2R50</name>
</gene>
<protein>
    <recommendedName>
        <fullName>Taste receptor type 2 member 50</fullName>
        <shortName>T2R50</shortName>
    </recommendedName>
</protein>
<reference key="1">
    <citation type="journal article" date="2005" name="Mol. Biol. Evol.">
        <title>Evolution of bitter taste receptors in humans and apes.</title>
        <authorList>
            <person name="Fischer A."/>
            <person name="Gilad Y."/>
            <person name="Man O."/>
            <person name="Paeaebo S."/>
        </authorList>
    </citation>
    <scope>NUCLEOTIDE SEQUENCE [GENOMIC DNA]</scope>
</reference>
<proteinExistence type="inferred from homology"/>
<sequence>MITFLYIFFSILIMVLFVLGNFANGFIALVNFIDWVKRKKISSADQILTALAVSRIGLLWTLLLNWYLTVLNPAFYSVELRITSYNAWVVTNHFSMWLAASLSIFYLLKIANFSNLIFLHLKRRVRSVILVILLGTLIFLVCHLLVANMDESMWAEEYEGNITGKMKLRNTVHLSYLTVTTLWSFIPFTLSLISFLMLICSLCKHLKKMQLHGEGSQDLSTKVHIKALQTLISFLLLCAIFFLFLIISVWSPRRLRNDPVVMVSKAVGNIYLAFDSFILIWRTKKLKHTFLLILCQIRC</sequence>
<dbReference type="EMBL" id="AY724874">
    <property type="protein sequence ID" value="AAU21096.1"/>
    <property type="molecule type" value="Genomic_DNA"/>
</dbReference>
<dbReference type="RefSeq" id="NP_001009143.1">
    <property type="nucleotide sequence ID" value="NM_001009143.1"/>
</dbReference>
<dbReference type="SMR" id="Q646C3"/>
<dbReference type="FunCoup" id="Q646C3">
    <property type="interactions" value="207"/>
</dbReference>
<dbReference type="STRING" id="9598.ENSPTRP00000054713"/>
<dbReference type="GlyCosmos" id="Q646C3">
    <property type="glycosylation" value="1 site, No reported glycans"/>
</dbReference>
<dbReference type="PaxDb" id="9598-ENSPTRP00000054722"/>
<dbReference type="GeneID" id="493897"/>
<dbReference type="KEGG" id="ptr:493897"/>
<dbReference type="CTD" id="259296"/>
<dbReference type="eggNOG" id="ENOG502TE6U">
    <property type="taxonomic scope" value="Eukaryota"/>
</dbReference>
<dbReference type="InParanoid" id="Q646C3"/>
<dbReference type="OrthoDB" id="14513at9604"/>
<dbReference type="Proteomes" id="UP000002277">
    <property type="component" value="Unplaced"/>
</dbReference>
<dbReference type="GO" id="GO:0016020">
    <property type="term" value="C:membrane"/>
    <property type="evidence" value="ECO:0000318"/>
    <property type="project" value="GO_Central"/>
</dbReference>
<dbReference type="GO" id="GO:0005886">
    <property type="term" value="C:plasma membrane"/>
    <property type="evidence" value="ECO:0007669"/>
    <property type="project" value="UniProtKB-ARBA"/>
</dbReference>
<dbReference type="GO" id="GO:0033038">
    <property type="term" value="F:bitter taste receptor activity"/>
    <property type="evidence" value="ECO:0000318"/>
    <property type="project" value="GO_Central"/>
</dbReference>
<dbReference type="GO" id="GO:0004930">
    <property type="term" value="F:G protein-coupled receptor activity"/>
    <property type="evidence" value="ECO:0007669"/>
    <property type="project" value="UniProtKB-KW"/>
</dbReference>
<dbReference type="GO" id="GO:0001580">
    <property type="term" value="P:detection of chemical stimulus involved in sensory perception of bitter taste"/>
    <property type="evidence" value="ECO:0000318"/>
    <property type="project" value="GO_Central"/>
</dbReference>
<dbReference type="CDD" id="cd15027">
    <property type="entry name" value="7tm_TAS2R43-like"/>
    <property type="match status" value="1"/>
</dbReference>
<dbReference type="FunFam" id="1.20.1070.10:FF:000042">
    <property type="entry name" value="Taste receptor type 2 member 7"/>
    <property type="match status" value="1"/>
</dbReference>
<dbReference type="Gene3D" id="1.20.1070.10">
    <property type="entry name" value="Rhodopsin 7-helix transmembrane proteins"/>
    <property type="match status" value="1"/>
</dbReference>
<dbReference type="InterPro" id="IPR007960">
    <property type="entry name" value="TAS2R"/>
</dbReference>
<dbReference type="PANTHER" id="PTHR11394">
    <property type="entry name" value="TASTE RECEPTOR TYPE 2"/>
    <property type="match status" value="1"/>
</dbReference>
<dbReference type="PANTHER" id="PTHR11394:SF43">
    <property type="entry name" value="TASTE RECEPTOR TYPE 2 MEMBER 50"/>
    <property type="match status" value="1"/>
</dbReference>
<dbReference type="Pfam" id="PF05296">
    <property type="entry name" value="TAS2R"/>
    <property type="match status" value="1"/>
</dbReference>
<dbReference type="SUPFAM" id="SSF81321">
    <property type="entry name" value="Family A G protein-coupled receptor-like"/>
    <property type="match status" value="1"/>
</dbReference>
<name>T2R50_PANTR</name>
<comment type="function">
    <text evidence="1">Receptor that may play a role in the perception of bitterness and is gustducin-linked. May play a role in sensing the chemical composition of the gastrointestinal content. The activity of this receptor may stimulate alpha gustducin, mediate PLC-beta-2 activation and lead to the gating of TRPM5 (By similarity).</text>
</comment>
<comment type="subcellular location">
    <subcellularLocation>
        <location>Membrane</location>
        <topology>Multi-pass membrane protein</topology>
    </subcellularLocation>
</comment>
<comment type="miscellaneous">
    <text>Most taste cells may be activated by a limited number of bitter compounds; individual taste cells can discriminate among bitter stimuli.</text>
</comment>
<comment type="similarity">
    <text evidence="3">Belongs to the G-protein coupled receptor T2R family.</text>
</comment>
<keyword id="KW-0297">G-protein coupled receptor</keyword>
<keyword id="KW-0325">Glycoprotein</keyword>
<keyword id="KW-0472">Membrane</keyword>
<keyword id="KW-0675">Receptor</keyword>
<keyword id="KW-1185">Reference proteome</keyword>
<keyword id="KW-0716">Sensory transduction</keyword>
<keyword id="KW-0919">Taste</keyword>
<keyword id="KW-0807">Transducer</keyword>
<keyword id="KW-0812">Transmembrane</keyword>
<keyword id="KW-1133">Transmembrane helix</keyword>
<accession>Q646C3</accession>
<evidence type="ECO:0000250" key="1"/>
<evidence type="ECO:0000255" key="2"/>
<evidence type="ECO:0000305" key="3"/>
<organism>
    <name type="scientific">Pan troglodytes</name>
    <name type="common">Chimpanzee</name>
    <dbReference type="NCBI Taxonomy" id="9598"/>
    <lineage>
        <taxon>Eukaryota</taxon>
        <taxon>Metazoa</taxon>
        <taxon>Chordata</taxon>
        <taxon>Craniata</taxon>
        <taxon>Vertebrata</taxon>
        <taxon>Euteleostomi</taxon>
        <taxon>Mammalia</taxon>
        <taxon>Eutheria</taxon>
        <taxon>Euarchontoglires</taxon>
        <taxon>Primates</taxon>
        <taxon>Haplorrhini</taxon>
        <taxon>Catarrhini</taxon>
        <taxon>Hominidae</taxon>
        <taxon>Pan</taxon>
    </lineage>
</organism>